<protein>
    <recommendedName>
        <fullName>Thiosulfate sulfurtransferase RDL2, mitochondrial</fullName>
        <ecNumber evidence="7">2.8.1.1</ecNumber>
    </recommendedName>
    <alternativeName>
        <fullName>Altered inheritance of mitochondria protein 42</fullName>
    </alternativeName>
    <alternativeName>
        <fullName>Found in mitochondrial proteome protein 31</fullName>
    </alternativeName>
    <alternativeName>
        <fullName>Rhodanese-like protein 2</fullName>
    </alternativeName>
</protein>
<keyword id="KW-0002">3D-structure</keyword>
<keyword id="KW-0496">Mitochondrion</keyword>
<keyword id="KW-1185">Reference proteome</keyword>
<keyword id="KW-0808">Transferase</keyword>
<keyword id="KW-0809">Transit peptide</keyword>
<sequence length="149" mass="16697">MFKHSTGILSRTVSARSPTLVLRTFTTKAPKIYTFDQVRNLVEHPNDKKLLVDVREPKEVKDYKMPTTINIPVNSAPGALGLPEKEFHKVFQFAKPPHDKELIFLCAKGVRAKTAEELARSYGYENTGIYPGSITEWLAKGGADVKPKK</sequence>
<comment type="function">
    <text evidence="7">Thiosulfate sulfurtransferase which catalyzes the transfer of sulfane sulfur from thiosulfate to cyanide.</text>
</comment>
<comment type="catalytic activity">
    <reaction evidence="7">
        <text>thiosulfate + hydrogen cyanide = thiocyanate + sulfite + 2 H(+)</text>
        <dbReference type="Rhea" id="RHEA:16881"/>
        <dbReference type="ChEBI" id="CHEBI:15378"/>
        <dbReference type="ChEBI" id="CHEBI:17359"/>
        <dbReference type="ChEBI" id="CHEBI:18022"/>
        <dbReference type="ChEBI" id="CHEBI:18407"/>
        <dbReference type="ChEBI" id="CHEBI:33542"/>
        <dbReference type="EC" id="2.8.1.1"/>
    </reaction>
    <physiologicalReaction direction="left-to-right" evidence="8">
        <dbReference type="Rhea" id="RHEA:16882"/>
    </physiologicalReaction>
</comment>
<comment type="subcellular location">
    <subcellularLocation>
        <location evidence="3 5">Mitochondrion</location>
    </subcellularLocation>
</comment>
<comment type="disruption phenotype">
    <text evidence="6">Increases frequency of mitochondrial genome loss.</text>
</comment>
<comment type="miscellaneous">
    <text evidence="4">Present with 4220 molecules/cell in log phase SD medium.</text>
</comment>
<gene>
    <name type="primary">RDL2</name>
    <name type="synonym">AIM42</name>
    <name type="synonym">FMP31</name>
    <name type="ordered locus">YOR286W</name>
</gene>
<name>RDL2_YEAST</name>
<evidence type="ECO:0000255" key="1"/>
<evidence type="ECO:0000255" key="2">
    <source>
        <dbReference type="PROSITE-ProRule" id="PRU00173"/>
    </source>
</evidence>
<evidence type="ECO:0000269" key="3">
    <source>
    </source>
</evidence>
<evidence type="ECO:0000269" key="4">
    <source>
    </source>
</evidence>
<evidence type="ECO:0000269" key="5">
    <source>
    </source>
</evidence>
<evidence type="ECO:0000269" key="6">
    <source>
    </source>
</evidence>
<evidence type="ECO:0000269" key="7">
    <source>
    </source>
</evidence>
<evidence type="ECO:0000305" key="8">
    <source>
    </source>
</evidence>
<evidence type="ECO:0007829" key="9">
    <source>
        <dbReference type="PDB" id="6K6R"/>
    </source>
</evidence>
<accession>Q08742</accession>
<accession>D6W2Y4</accession>
<feature type="transit peptide" description="Mitochondrion" evidence="1">
    <location>
        <begin position="1"/>
        <end position="25"/>
    </location>
</feature>
<feature type="chain" id="PRO_0000245268" description="Thiosulfate sulfurtransferase RDL2, mitochondrial">
    <location>
        <begin position="26"/>
        <end position="149"/>
    </location>
</feature>
<feature type="domain" description="Rhodanese" evidence="2">
    <location>
        <begin position="45"/>
        <end position="146"/>
    </location>
</feature>
<feature type="active site" description="Cysteine persulfide intermediate" evidence="2">
    <location>
        <position position="106"/>
    </location>
</feature>
<feature type="helix" evidence="9">
    <location>
        <begin position="35"/>
        <end position="43"/>
    </location>
</feature>
<feature type="strand" evidence="9">
    <location>
        <begin position="49"/>
        <end position="53"/>
    </location>
</feature>
<feature type="helix" evidence="9">
    <location>
        <begin position="57"/>
        <end position="60"/>
    </location>
</feature>
<feature type="turn" evidence="9">
    <location>
        <begin position="73"/>
        <end position="75"/>
    </location>
</feature>
<feature type="helix" evidence="9">
    <location>
        <begin position="79"/>
        <end position="81"/>
    </location>
</feature>
<feature type="helix" evidence="9">
    <location>
        <begin position="84"/>
        <end position="91"/>
    </location>
</feature>
<feature type="strand" evidence="9">
    <location>
        <begin position="100"/>
        <end position="106"/>
    </location>
</feature>
<feature type="strand" evidence="9">
    <location>
        <begin position="108"/>
        <end position="110"/>
    </location>
</feature>
<feature type="helix" evidence="9">
    <location>
        <begin position="111"/>
        <end position="121"/>
    </location>
</feature>
<feature type="strand" evidence="9">
    <location>
        <begin position="127"/>
        <end position="133"/>
    </location>
</feature>
<feature type="helix" evidence="9">
    <location>
        <begin position="134"/>
        <end position="139"/>
    </location>
</feature>
<feature type="helix" evidence="9">
    <location>
        <begin position="142"/>
        <end position="144"/>
    </location>
</feature>
<organism>
    <name type="scientific">Saccharomyces cerevisiae (strain ATCC 204508 / S288c)</name>
    <name type="common">Baker's yeast</name>
    <dbReference type="NCBI Taxonomy" id="559292"/>
    <lineage>
        <taxon>Eukaryota</taxon>
        <taxon>Fungi</taxon>
        <taxon>Dikarya</taxon>
        <taxon>Ascomycota</taxon>
        <taxon>Saccharomycotina</taxon>
        <taxon>Saccharomycetes</taxon>
        <taxon>Saccharomycetales</taxon>
        <taxon>Saccharomycetaceae</taxon>
        <taxon>Saccharomyces</taxon>
    </lineage>
</organism>
<reference key="1">
    <citation type="journal article" date="1997" name="Nature">
        <title>The nucleotide sequence of Saccharomyces cerevisiae chromosome XV.</title>
        <authorList>
            <person name="Dujon B."/>
            <person name="Albermann K."/>
            <person name="Aldea M."/>
            <person name="Alexandraki D."/>
            <person name="Ansorge W."/>
            <person name="Arino J."/>
            <person name="Benes V."/>
            <person name="Bohn C."/>
            <person name="Bolotin-Fukuhara M."/>
            <person name="Bordonne R."/>
            <person name="Boyer J."/>
            <person name="Camasses A."/>
            <person name="Casamayor A."/>
            <person name="Casas C."/>
            <person name="Cheret G."/>
            <person name="Cziepluch C."/>
            <person name="Daignan-Fornier B."/>
            <person name="Dang V.-D."/>
            <person name="de Haan M."/>
            <person name="Delius H."/>
            <person name="Durand P."/>
            <person name="Fairhead C."/>
            <person name="Feldmann H."/>
            <person name="Gaillon L."/>
            <person name="Galisson F."/>
            <person name="Gamo F.-J."/>
            <person name="Gancedo C."/>
            <person name="Goffeau A."/>
            <person name="Goulding S.E."/>
            <person name="Grivell L.A."/>
            <person name="Habbig B."/>
            <person name="Hand N.J."/>
            <person name="Hani J."/>
            <person name="Hattenhorst U."/>
            <person name="Hebling U."/>
            <person name="Hernando Y."/>
            <person name="Herrero E."/>
            <person name="Heumann K."/>
            <person name="Hiesel R."/>
            <person name="Hilger F."/>
            <person name="Hofmann B."/>
            <person name="Hollenberg C.P."/>
            <person name="Hughes B."/>
            <person name="Jauniaux J.-C."/>
            <person name="Kalogeropoulos A."/>
            <person name="Katsoulou C."/>
            <person name="Kordes E."/>
            <person name="Lafuente M.J."/>
            <person name="Landt O."/>
            <person name="Louis E.J."/>
            <person name="Maarse A.C."/>
            <person name="Madania A."/>
            <person name="Mannhaupt G."/>
            <person name="Marck C."/>
            <person name="Martin R.P."/>
            <person name="Mewes H.-W."/>
            <person name="Michaux G."/>
            <person name="Paces V."/>
            <person name="Parle-McDermott A.G."/>
            <person name="Pearson B.M."/>
            <person name="Perrin A."/>
            <person name="Pettersson B."/>
            <person name="Poch O."/>
            <person name="Pohl T.M."/>
            <person name="Poirey R."/>
            <person name="Portetelle D."/>
            <person name="Pujol A."/>
            <person name="Purnelle B."/>
            <person name="Ramezani Rad M."/>
            <person name="Rechmann S."/>
            <person name="Schwager C."/>
            <person name="Schweizer M."/>
            <person name="Sor F."/>
            <person name="Sterky F."/>
            <person name="Tarassov I.A."/>
            <person name="Teodoru C."/>
            <person name="Tettelin H."/>
            <person name="Thierry A."/>
            <person name="Tobiasch E."/>
            <person name="Tzermia M."/>
            <person name="Uhlen M."/>
            <person name="Unseld M."/>
            <person name="Valens M."/>
            <person name="Vandenbol M."/>
            <person name="Vetter I."/>
            <person name="Vlcek C."/>
            <person name="Voet M."/>
            <person name="Volckaert G."/>
            <person name="Voss H."/>
            <person name="Wambutt R."/>
            <person name="Wedler H."/>
            <person name="Wiemann S."/>
            <person name="Winsor B."/>
            <person name="Wolfe K.H."/>
            <person name="Zollner A."/>
            <person name="Zumstein E."/>
            <person name="Kleine K."/>
        </authorList>
    </citation>
    <scope>NUCLEOTIDE SEQUENCE [LARGE SCALE GENOMIC DNA]</scope>
    <source>
        <strain>ATCC 204508 / S288c</strain>
    </source>
</reference>
<reference key="2">
    <citation type="journal article" date="2014" name="G3 (Bethesda)">
        <title>The reference genome sequence of Saccharomyces cerevisiae: Then and now.</title>
        <authorList>
            <person name="Engel S.R."/>
            <person name="Dietrich F.S."/>
            <person name="Fisk D.G."/>
            <person name="Binkley G."/>
            <person name="Balakrishnan R."/>
            <person name="Costanzo M.C."/>
            <person name="Dwight S.S."/>
            <person name="Hitz B.C."/>
            <person name="Karra K."/>
            <person name="Nash R.S."/>
            <person name="Weng S."/>
            <person name="Wong E.D."/>
            <person name="Lloyd P."/>
            <person name="Skrzypek M.S."/>
            <person name="Miyasato S.R."/>
            <person name="Simison M."/>
            <person name="Cherry J.M."/>
        </authorList>
    </citation>
    <scope>GENOME REANNOTATION</scope>
    <source>
        <strain>ATCC 204508 / S288c</strain>
    </source>
</reference>
<reference key="3">
    <citation type="journal article" date="2007" name="Genome Res.">
        <title>Approaching a complete repository of sequence-verified protein-encoding clones for Saccharomyces cerevisiae.</title>
        <authorList>
            <person name="Hu Y."/>
            <person name="Rolfs A."/>
            <person name="Bhullar B."/>
            <person name="Murthy T.V.S."/>
            <person name="Zhu C."/>
            <person name="Berger M.F."/>
            <person name="Camargo A.A."/>
            <person name="Kelley F."/>
            <person name="McCarron S."/>
            <person name="Jepson D."/>
            <person name="Richardson A."/>
            <person name="Raphael J."/>
            <person name="Moreira D."/>
            <person name="Taycher E."/>
            <person name="Zuo D."/>
            <person name="Mohr S."/>
            <person name="Kane M.F."/>
            <person name="Williamson J."/>
            <person name="Simpson A.J.G."/>
            <person name="Bulyk M.L."/>
            <person name="Harlow E."/>
            <person name="Marsischky G."/>
            <person name="Kolodner R.D."/>
            <person name="LaBaer J."/>
        </authorList>
    </citation>
    <scope>NUCLEOTIDE SEQUENCE [GENOMIC DNA]</scope>
    <source>
        <strain>ATCC 204508 / S288c</strain>
    </source>
</reference>
<reference key="4">
    <citation type="journal article" date="2003" name="Nature">
        <title>Global analysis of protein localization in budding yeast.</title>
        <authorList>
            <person name="Huh W.-K."/>
            <person name="Falvo J.V."/>
            <person name="Gerke L.C."/>
            <person name="Carroll A.S."/>
            <person name="Howson R.W."/>
            <person name="Weissman J.S."/>
            <person name="O'Shea E.K."/>
        </authorList>
    </citation>
    <scope>SUBCELLULAR LOCATION [LARGE SCALE ANALYSIS]</scope>
</reference>
<reference key="5">
    <citation type="journal article" date="2003" name="Nature">
        <title>Global analysis of protein expression in yeast.</title>
        <authorList>
            <person name="Ghaemmaghami S."/>
            <person name="Huh W.-K."/>
            <person name="Bower K."/>
            <person name="Howson R.W."/>
            <person name="Belle A."/>
            <person name="Dephoure N."/>
            <person name="O'Shea E.K."/>
            <person name="Weissman J.S."/>
        </authorList>
    </citation>
    <scope>LEVEL OF PROTEIN EXPRESSION [LARGE SCALE ANALYSIS]</scope>
</reference>
<reference key="6">
    <citation type="journal article" date="2003" name="Proc. Natl. Acad. Sci. U.S.A.">
        <title>The proteome of Saccharomyces cerevisiae mitochondria.</title>
        <authorList>
            <person name="Sickmann A."/>
            <person name="Reinders J."/>
            <person name="Wagner Y."/>
            <person name="Joppich C."/>
            <person name="Zahedi R.P."/>
            <person name="Meyer H.E."/>
            <person name="Schoenfisch B."/>
            <person name="Perschil I."/>
            <person name="Chacinska A."/>
            <person name="Guiard B."/>
            <person name="Rehling P."/>
            <person name="Pfanner N."/>
            <person name="Meisinger C."/>
        </authorList>
    </citation>
    <scope>SUBCELLULAR LOCATION [LARGE SCALE ANALYSIS]</scope>
    <source>
        <strain>ATCC 76625 / YPH499</strain>
    </source>
</reference>
<reference key="7">
    <citation type="journal article" date="2009" name="PLoS Genet.">
        <title>Computationally driven, quantitative experiments discover genes required for mitochondrial biogenesis.</title>
        <authorList>
            <person name="Hess D.C."/>
            <person name="Myers C.L."/>
            <person name="Huttenhower C."/>
            <person name="Hibbs M.A."/>
            <person name="Hayes A.P."/>
            <person name="Paw J."/>
            <person name="Clore J.J."/>
            <person name="Mendoza R.M."/>
            <person name="Luis B.S."/>
            <person name="Nislow C."/>
            <person name="Giaever G."/>
            <person name="Costanzo M."/>
            <person name="Troyanskaya O.G."/>
            <person name="Caudy A.A."/>
        </authorList>
    </citation>
    <scope>DISRUPTION PHENOTYPE</scope>
</reference>
<reference key="8">
    <citation type="journal article" date="2009" name="Proc. Natl. Acad. Sci. U.S.A.">
        <title>A protein microarray-based analysis of S-nitrosylation.</title>
        <authorList>
            <person name="Foster M.W."/>
            <person name="Forrester M.T."/>
            <person name="Stamler J.S."/>
        </authorList>
    </citation>
    <scope>FUNCTION</scope>
    <scope>CATALYTIC ACTIVITY</scope>
</reference>
<proteinExistence type="evidence at protein level"/>
<dbReference type="EC" id="2.8.1.1" evidence="7"/>
<dbReference type="EMBL" id="Z75194">
    <property type="protein sequence ID" value="CAA99513.1"/>
    <property type="molecule type" value="Genomic_DNA"/>
</dbReference>
<dbReference type="EMBL" id="AY692684">
    <property type="protein sequence ID" value="AAT92703.1"/>
    <property type="molecule type" value="Genomic_DNA"/>
</dbReference>
<dbReference type="EMBL" id="BK006948">
    <property type="protein sequence ID" value="DAA11050.1"/>
    <property type="molecule type" value="Genomic_DNA"/>
</dbReference>
<dbReference type="PIR" id="S67188">
    <property type="entry name" value="S67188"/>
</dbReference>
<dbReference type="RefSeq" id="NP_014929.3">
    <property type="nucleotide sequence ID" value="NM_001183705.3"/>
</dbReference>
<dbReference type="PDB" id="6K6R">
    <property type="method" value="X-ray"/>
    <property type="resolution" value="2.47 A"/>
    <property type="chains" value="A/D=1-149"/>
</dbReference>
<dbReference type="PDBsum" id="6K6R"/>
<dbReference type="SMR" id="Q08742"/>
<dbReference type="BioGRID" id="34673">
    <property type="interactions" value="69"/>
</dbReference>
<dbReference type="DIP" id="DIP-4456N"/>
<dbReference type="FunCoup" id="Q08742">
    <property type="interactions" value="734"/>
</dbReference>
<dbReference type="IntAct" id="Q08742">
    <property type="interactions" value="1"/>
</dbReference>
<dbReference type="STRING" id="4932.YOR286W"/>
<dbReference type="iPTMnet" id="Q08742"/>
<dbReference type="PaxDb" id="4932-YOR286W"/>
<dbReference type="PeptideAtlas" id="Q08742"/>
<dbReference type="EnsemblFungi" id="YOR286W_mRNA">
    <property type="protein sequence ID" value="YOR286W"/>
    <property type="gene ID" value="YOR286W"/>
</dbReference>
<dbReference type="GeneID" id="854460"/>
<dbReference type="KEGG" id="sce:YOR286W"/>
<dbReference type="AGR" id="SGD:S000005812"/>
<dbReference type="SGD" id="S000005812">
    <property type="gene designation" value="RDL2"/>
</dbReference>
<dbReference type="VEuPathDB" id="FungiDB:YOR286W"/>
<dbReference type="eggNOG" id="KOG1530">
    <property type="taxonomic scope" value="Eukaryota"/>
</dbReference>
<dbReference type="GeneTree" id="ENSGT00940000163155"/>
<dbReference type="HOGENOM" id="CLU_089574_0_2_1"/>
<dbReference type="InParanoid" id="Q08742"/>
<dbReference type="OMA" id="YEGSWTD"/>
<dbReference type="OrthoDB" id="566238at2759"/>
<dbReference type="BioCyc" id="MetaCyc:G3O-33772-MONOMER"/>
<dbReference type="BioCyc" id="YEAST:G3O-33772-MONOMER"/>
<dbReference type="BioGRID-ORCS" id="854460">
    <property type="hits" value="3 hits in 10 CRISPR screens"/>
</dbReference>
<dbReference type="PRO" id="PR:Q08742"/>
<dbReference type="Proteomes" id="UP000002311">
    <property type="component" value="Chromosome XV"/>
</dbReference>
<dbReference type="RNAct" id="Q08742">
    <property type="molecule type" value="protein"/>
</dbReference>
<dbReference type="GO" id="GO:0005739">
    <property type="term" value="C:mitochondrion"/>
    <property type="evidence" value="ECO:0007005"/>
    <property type="project" value="SGD"/>
</dbReference>
<dbReference type="GO" id="GO:0004792">
    <property type="term" value="F:thiosulfate-cyanide sulfurtransferase activity"/>
    <property type="evidence" value="ECO:0000314"/>
    <property type="project" value="SGD"/>
</dbReference>
<dbReference type="GO" id="GO:0006790">
    <property type="term" value="P:sulfur compound metabolic process"/>
    <property type="evidence" value="ECO:0000314"/>
    <property type="project" value="SGD"/>
</dbReference>
<dbReference type="CDD" id="cd01519">
    <property type="entry name" value="RHOD_HSP67B2"/>
    <property type="match status" value="1"/>
</dbReference>
<dbReference type="FunFam" id="3.40.250.10:FF:000065">
    <property type="entry name" value="YOR286W-like protein"/>
    <property type="match status" value="1"/>
</dbReference>
<dbReference type="Gene3D" id="3.40.250.10">
    <property type="entry name" value="Rhodanese-like domain"/>
    <property type="match status" value="1"/>
</dbReference>
<dbReference type="InterPro" id="IPR001763">
    <property type="entry name" value="Rhodanese-like_dom"/>
</dbReference>
<dbReference type="InterPro" id="IPR036873">
    <property type="entry name" value="Rhodanese-like_dom_sf"/>
</dbReference>
<dbReference type="PANTHER" id="PTHR44086">
    <property type="entry name" value="THIOSULFATE SULFURTRANSFERASE RDL2, MITOCHONDRIAL-RELATED"/>
    <property type="match status" value="1"/>
</dbReference>
<dbReference type="PANTHER" id="PTHR44086:SF10">
    <property type="entry name" value="THIOSULFATE SULFURTRANSFERASE_RHODANESE-LIKE DOMAIN-CONTAINING PROTEIN 3"/>
    <property type="match status" value="1"/>
</dbReference>
<dbReference type="Pfam" id="PF00581">
    <property type="entry name" value="Rhodanese"/>
    <property type="match status" value="1"/>
</dbReference>
<dbReference type="SMART" id="SM00450">
    <property type="entry name" value="RHOD"/>
    <property type="match status" value="1"/>
</dbReference>
<dbReference type="SUPFAM" id="SSF52821">
    <property type="entry name" value="Rhodanese/Cell cycle control phosphatase"/>
    <property type="match status" value="1"/>
</dbReference>
<dbReference type="PROSITE" id="PS50206">
    <property type="entry name" value="RHODANESE_3"/>
    <property type="match status" value="1"/>
</dbReference>